<feature type="chain" id="PRO_1000075668" description="Holo-[acyl-carrier-protein] synthase">
    <location>
        <begin position="1"/>
        <end position="127"/>
    </location>
</feature>
<feature type="binding site" evidence="1">
    <location>
        <position position="8"/>
    </location>
    <ligand>
        <name>Mg(2+)</name>
        <dbReference type="ChEBI" id="CHEBI:18420"/>
    </ligand>
</feature>
<feature type="binding site" evidence="1">
    <location>
        <position position="57"/>
    </location>
    <ligand>
        <name>Mg(2+)</name>
        <dbReference type="ChEBI" id="CHEBI:18420"/>
    </ligand>
</feature>
<reference key="1">
    <citation type="journal article" date="2007" name="Curr. Biol.">
        <title>Reduced genome of the thioautotrophic intracellular symbiont in a deep-sea clam, Calyptogena okutanii.</title>
        <authorList>
            <person name="Kuwahara H."/>
            <person name="Yoshida T."/>
            <person name="Takaki Y."/>
            <person name="Shimamura S."/>
            <person name="Nishi S."/>
            <person name="Harada M."/>
            <person name="Matsuyama K."/>
            <person name="Takishita K."/>
            <person name="Kawato M."/>
            <person name="Uematsu K."/>
            <person name="Fujiwara Y."/>
            <person name="Sato T."/>
            <person name="Kato C."/>
            <person name="Kitagawa M."/>
            <person name="Kato I."/>
            <person name="Maruyama T."/>
        </authorList>
    </citation>
    <scope>NUCLEOTIDE SEQUENCE [LARGE SCALE GENOMIC DNA]</scope>
    <source>
        <strain>HA</strain>
    </source>
</reference>
<evidence type="ECO:0000255" key="1">
    <source>
        <dbReference type="HAMAP-Rule" id="MF_00101"/>
    </source>
</evidence>
<protein>
    <recommendedName>
        <fullName evidence="1">Holo-[acyl-carrier-protein] synthase</fullName>
        <shortName evidence="1">Holo-ACP synthase</shortName>
        <ecNumber evidence="1">2.7.8.7</ecNumber>
    </recommendedName>
    <alternativeName>
        <fullName evidence="1">4'-phosphopantetheinyl transferase AcpS</fullName>
    </alternativeName>
</protein>
<organism>
    <name type="scientific">Vesicomyosocius okutanii subsp. Calyptogena okutanii (strain HA)</name>
    <dbReference type="NCBI Taxonomy" id="412965"/>
    <lineage>
        <taxon>Bacteria</taxon>
        <taxon>Pseudomonadati</taxon>
        <taxon>Pseudomonadota</taxon>
        <taxon>Gammaproteobacteria</taxon>
        <taxon>Candidatus Pseudothioglobaceae</taxon>
        <taxon>Candidatus Vesicomyosocius</taxon>
    </lineage>
</organism>
<name>ACPS_VESOH</name>
<dbReference type="EC" id="2.7.8.7" evidence="1"/>
<dbReference type="EMBL" id="AP009247">
    <property type="protein sequence ID" value="BAF61680.1"/>
    <property type="molecule type" value="Genomic_DNA"/>
</dbReference>
<dbReference type="RefSeq" id="WP_011929950.1">
    <property type="nucleotide sequence ID" value="NC_009465.1"/>
</dbReference>
<dbReference type="SMR" id="A5CWJ8"/>
<dbReference type="STRING" id="412965.COSY_0563"/>
<dbReference type="KEGG" id="vok:COSY_0563"/>
<dbReference type="eggNOG" id="COG0736">
    <property type="taxonomic scope" value="Bacteria"/>
</dbReference>
<dbReference type="HOGENOM" id="CLU_089696_3_1_6"/>
<dbReference type="OrthoDB" id="517356at2"/>
<dbReference type="Proteomes" id="UP000000247">
    <property type="component" value="Chromosome"/>
</dbReference>
<dbReference type="GO" id="GO:0005737">
    <property type="term" value="C:cytoplasm"/>
    <property type="evidence" value="ECO:0007669"/>
    <property type="project" value="UniProtKB-SubCell"/>
</dbReference>
<dbReference type="GO" id="GO:0008897">
    <property type="term" value="F:holo-[acyl-carrier-protein] synthase activity"/>
    <property type="evidence" value="ECO:0007669"/>
    <property type="project" value="UniProtKB-UniRule"/>
</dbReference>
<dbReference type="GO" id="GO:0000287">
    <property type="term" value="F:magnesium ion binding"/>
    <property type="evidence" value="ECO:0007669"/>
    <property type="project" value="UniProtKB-UniRule"/>
</dbReference>
<dbReference type="GO" id="GO:0006633">
    <property type="term" value="P:fatty acid biosynthetic process"/>
    <property type="evidence" value="ECO:0007669"/>
    <property type="project" value="UniProtKB-UniRule"/>
</dbReference>
<dbReference type="Gene3D" id="3.90.470.20">
    <property type="entry name" value="4'-phosphopantetheinyl transferase domain"/>
    <property type="match status" value="1"/>
</dbReference>
<dbReference type="HAMAP" id="MF_00101">
    <property type="entry name" value="AcpS"/>
    <property type="match status" value="1"/>
</dbReference>
<dbReference type="InterPro" id="IPR008278">
    <property type="entry name" value="4-PPantetheinyl_Trfase_dom"/>
</dbReference>
<dbReference type="InterPro" id="IPR037143">
    <property type="entry name" value="4-PPantetheinyl_Trfase_dom_sf"/>
</dbReference>
<dbReference type="InterPro" id="IPR002582">
    <property type="entry name" value="ACPS"/>
</dbReference>
<dbReference type="InterPro" id="IPR004568">
    <property type="entry name" value="Ppantetheine-prot_Trfase_dom"/>
</dbReference>
<dbReference type="NCBIfam" id="TIGR00516">
    <property type="entry name" value="acpS"/>
    <property type="match status" value="1"/>
</dbReference>
<dbReference type="NCBIfam" id="TIGR00556">
    <property type="entry name" value="pantethn_trn"/>
    <property type="match status" value="1"/>
</dbReference>
<dbReference type="Pfam" id="PF01648">
    <property type="entry name" value="ACPS"/>
    <property type="match status" value="1"/>
</dbReference>
<dbReference type="SUPFAM" id="SSF56214">
    <property type="entry name" value="4'-phosphopantetheinyl transferase"/>
    <property type="match status" value="1"/>
</dbReference>
<sequence>MIYGVGVDIVNIERVERILSKNKEGFVKRVLSEYEQVLFAKKGDSSTYCAKRFSAKEAFAKALGIGIGKIVSFQDLTICNNKQGNPYFIFSAKLCLYLVDKNIKKAHLSLSDEKFNAMAFVILEIEN</sequence>
<proteinExistence type="inferred from homology"/>
<keyword id="KW-0963">Cytoplasm</keyword>
<keyword id="KW-0275">Fatty acid biosynthesis</keyword>
<keyword id="KW-0276">Fatty acid metabolism</keyword>
<keyword id="KW-0444">Lipid biosynthesis</keyword>
<keyword id="KW-0443">Lipid metabolism</keyword>
<keyword id="KW-0460">Magnesium</keyword>
<keyword id="KW-0479">Metal-binding</keyword>
<keyword id="KW-1185">Reference proteome</keyword>
<keyword id="KW-0808">Transferase</keyword>
<gene>
    <name evidence="1" type="primary">acpS</name>
    <name type="ordered locus">COSY_0563</name>
</gene>
<accession>A5CWJ8</accession>
<comment type="function">
    <text evidence="1">Transfers the 4'-phosphopantetheine moiety from coenzyme A to a Ser of acyl-carrier-protein.</text>
</comment>
<comment type="catalytic activity">
    <reaction evidence="1">
        <text>apo-[ACP] + CoA = holo-[ACP] + adenosine 3',5'-bisphosphate + H(+)</text>
        <dbReference type="Rhea" id="RHEA:12068"/>
        <dbReference type="Rhea" id="RHEA-COMP:9685"/>
        <dbReference type="Rhea" id="RHEA-COMP:9690"/>
        <dbReference type="ChEBI" id="CHEBI:15378"/>
        <dbReference type="ChEBI" id="CHEBI:29999"/>
        <dbReference type="ChEBI" id="CHEBI:57287"/>
        <dbReference type="ChEBI" id="CHEBI:58343"/>
        <dbReference type="ChEBI" id="CHEBI:64479"/>
        <dbReference type="EC" id="2.7.8.7"/>
    </reaction>
</comment>
<comment type="cofactor">
    <cofactor evidence="1">
        <name>Mg(2+)</name>
        <dbReference type="ChEBI" id="CHEBI:18420"/>
    </cofactor>
</comment>
<comment type="subcellular location">
    <subcellularLocation>
        <location evidence="1">Cytoplasm</location>
    </subcellularLocation>
</comment>
<comment type="similarity">
    <text evidence="1">Belongs to the P-Pant transferase superfamily. AcpS family.</text>
</comment>